<evidence type="ECO:0000255" key="1">
    <source>
        <dbReference type="HAMAP-Rule" id="MF_00537"/>
    </source>
</evidence>
<evidence type="ECO:0000305" key="2"/>
<keyword id="KW-0150">Chloroplast</keyword>
<keyword id="KW-0934">Plastid</keyword>
<keyword id="KW-0687">Ribonucleoprotein</keyword>
<keyword id="KW-0689">Ribosomal protein</keyword>
<keyword id="KW-0694">RNA-binding</keyword>
<keyword id="KW-0699">rRNA-binding</keyword>
<sequence>MAKKNMIQREIKRSKLAKKYYLKRLAIKDQLKEAGSFSDKMDLRQNSKEMPRNSAAVRGRNRCWLTGRSRGYYRDFGLSRHVFREMSHECLLPGVTKSSW</sequence>
<gene>
    <name evidence="1" type="primary">rps14</name>
</gene>
<organism>
    <name type="scientific">Pyropia yezoensis</name>
    <name type="common">Susabi-nori</name>
    <name type="synonym">Porphyra yezoensis</name>
    <dbReference type="NCBI Taxonomy" id="2788"/>
    <lineage>
        <taxon>Eukaryota</taxon>
        <taxon>Rhodophyta</taxon>
        <taxon>Bangiophyceae</taxon>
        <taxon>Bangiales</taxon>
        <taxon>Bangiaceae</taxon>
        <taxon>Pyropia</taxon>
    </lineage>
</organism>
<protein>
    <recommendedName>
        <fullName evidence="1">Small ribosomal subunit protein uS14c</fullName>
    </recommendedName>
    <alternativeName>
        <fullName evidence="2">30S ribosomal protein S14, chloroplastic</fullName>
    </alternativeName>
</protein>
<feature type="chain" id="PRO_0000276713" description="Small ribosomal subunit protein uS14c">
    <location>
        <begin position="1"/>
        <end position="100"/>
    </location>
</feature>
<name>RR14_PYRYE</name>
<reference key="1">
    <citation type="submission" date="2003-11" db="EMBL/GenBank/DDBJ databases">
        <title>Whole genome sequence of Porphyra yezoensis chloroplast.</title>
        <authorList>
            <person name="Kunimoto M."/>
            <person name="Morishima K."/>
            <person name="Yoshikawa M."/>
            <person name="Fukuda S."/>
            <person name="Kobayashi T."/>
            <person name="Kobayashi M."/>
            <person name="Okazaki T."/>
            <person name="Ohara I."/>
            <person name="Nakayama I."/>
        </authorList>
    </citation>
    <scope>NUCLEOTIDE SEQUENCE [LARGE SCALE GENOMIC DNA]</scope>
    <source>
        <strain>U-51</strain>
    </source>
</reference>
<comment type="function">
    <text evidence="1">Binds 16S rRNA, required for the assembly of 30S particles.</text>
</comment>
<comment type="subunit">
    <text evidence="1">Part of the 30S ribosomal subunit.</text>
</comment>
<comment type="subcellular location">
    <subcellularLocation>
        <location>Plastid</location>
        <location>Chloroplast</location>
    </subcellularLocation>
</comment>
<comment type="similarity">
    <text evidence="1">Belongs to the universal ribosomal protein uS14 family.</text>
</comment>
<geneLocation type="chloroplast"/>
<accession>Q1XDG8</accession>
<dbReference type="EMBL" id="AP006715">
    <property type="protein sequence ID" value="BAE92443.1"/>
    <property type="molecule type" value="Genomic_DNA"/>
</dbReference>
<dbReference type="RefSeq" id="YP_537000.1">
    <property type="nucleotide sequence ID" value="NC_007932.1"/>
</dbReference>
<dbReference type="SMR" id="Q1XDG8"/>
<dbReference type="GeneID" id="3978811"/>
<dbReference type="GO" id="GO:0009507">
    <property type="term" value="C:chloroplast"/>
    <property type="evidence" value="ECO:0007669"/>
    <property type="project" value="UniProtKB-SubCell"/>
</dbReference>
<dbReference type="GO" id="GO:0015935">
    <property type="term" value="C:small ribosomal subunit"/>
    <property type="evidence" value="ECO:0007669"/>
    <property type="project" value="TreeGrafter"/>
</dbReference>
<dbReference type="GO" id="GO:0019843">
    <property type="term" value="F:rRNA binding"/>
    <property type="evidence" value="ECO:0007669"/>
    <property type="project" value="UniProtKB-UniRule"/>
</dbReference>
<dbReference type="GO" id="GO:0003735">
    <property type="term" value="F:structural constituent of ribosome"/>
    <property type="evidence" value="ECO:0007669"/>
    <property type="project" value="InterPro"/>
</dbReference>
<dbReference type="GO" id="GO:0006412">
    <property type="term" value="P:translation"/>
    <property type="evidence" value="ECO:0007669"/>
    <property type="project" value="UniProtKB-UniRule"/>
</dbReference>
<dbReference type="FunFam" id="1.10.287.1480:FF:000001">
    <property type="entry name" value="30S ribosomal protein S14"/>
    <property type="match status" value="1"/>
</dbReference>
<dbReference type="Gene3D" id="1.10.287.1480">
    <property type="match status" value="1"/>
</dbReference>
<dbReference type="HAMAP" id="MF_00537">
    <property type="entry name" value="Ribosomal_uS14_1"/>
    <property type="match status" value="1"/>
</dbReference>
<dbReference type="InterPro" id="IPR001209">
    <property type="entry name" value="Ribosomal_uS14"/>
</dbReference>
<dbReference type="InterPro" id="IPR023036">
    <property type="entry name" value="Ribosomal_uS14_bac/plastid"/>
</dbReference>
<dbReference type="InterPro" id="IPR018271">
    <property type="entry name" value="Ribosomal_uS14_CS"/>
</dbReference>
<dbReference type="NCBIfam" id="NF006477">
    <property type="entry name" value="PRK08881.1"/>
    <property type="match status" value="1"/>
</dbReference>
<dbReference type="PANTHER" id="PTHR19836">
    <property type="entry name" value="30S RIBOSOMAL PROTEIN S14"/>
    <property type="match status" value="1"/>
</dbReference>
<dbReference type="PANTHER" id="PTHR19836:SF19">
    <property type="entry name" value="SMALL RIBOSOMAL SUBUNIT PROTEIN US14M"/>
    <property type="match status" value="1"/>
</dbReference>
<dbReference type="Pfam" id="PF00253">
    <property type="entry name" value="Ribosomal_S14"/>
    <property type="match status" value="1"/>
</dbReference>
<dbReference type="SUPFAM" id="SSF57716">
    <property type="entry name" value="Glucocorticoid receptor-like (DNA-binding domain)"/>
    <property type="match status" value="1"/>
</dbReference>
<dbReference type="PROSITE" id="PS00527">
    <property type="entry name" value="RIBOSOMAL_S14"/>
    <property type="match status" value="1"/>
</dbReference>
<proteinExistence type="inferred from homology"/>